<evidence type="ECO:0000255" key="1">
    <source>
        <dbReference type="HAMAP-Rule" id="MF_00251"/>
    </source>
</evidence>
<evidence type="ECO:0000305" key="2"/>
<sequence>MKVRNSLKSLLTRHRENRLVRRKGRLYVINKTQRRFKARQG</sequence>
<dbReference type="EMBL" id="CP001096">
    <property type="protein sequence ID" value="ACF03168.1"/>
    <property type="molecule type" value="Genomic_DNA"/>
</dbReference>
<dbReference type="KEGG" id="rpt:Rpal_4677"/>
<dbReference type="HOGENOM" id="CLU_135723_3_0_5"/>
<dbReference type="OrthoDB" id="9801558at2"/>
<dbReference type="Proteomes" id="UP000001725">
    <property type="component" value="Chromosome"/>
</dbReference>
<dbReference type="GO" id="GO:1990904">
    <property type="term" value="C:ribonucleoprotein complex"/>
    <property type="evidence" value="ECO:0007669"/>
    <property type="project" value="UniProtKB-KW"/>
</dbReference>
<dbReference type="GO" id="GO:0005840">
    <property type="term" value="C:ribosome"/>
    <property type="evidence" value="ECO:0007669"/>
    <property type="project" value="UniProtKB-KW"/>
</dbReference>
<dbReference type="GO" id="GO:0003735">
    <property type="term" value="F:structural constituent of ribosome"/>
    <property type="evidence" value="ECO:0007669"/>
    <property type="project" value="InterPro"/>
</dbReference>
<dbReference type="GO" id="GO:0006412">
    <property type="term" value="P:translation"/>
    <property type="evidence" value="ECO:0007669"/>
    <property type="project" value="UniProtKB-UniRule"/>
</dbReference>
<dbReference type="HAMAP" id="MF_00251">
    <property type="entry name" value="Ribosomal_bL36"/>
    <property type="match status" value="1"/>
</dbReference>
<dbReference type="InterPro" id="IPR000473">
    <property type="entry name" value="Ribosomal_bL36"/>
</dbReference>
<dbReference type="InterPro" id="IPR035977">
    <property type="entry name" value="Ribosomal_bL36_sp"/>
</dbReference>
<dbReference type="InterPro" id="IPR047621">
    <property type="entry name" value="Ribosomal_L36_bact"/>
</dbReference>
<dbReference type="NCBIfam" id="NF002021">
    <property type="entry name" value="PRK00831.1"/>
    <property type="match status" value="1"/>
</dbReference>
<dbReference type="NCBIfam" id="TIGR01022">
    <property type="entry name" value="rpmJ_bact"/>
    <property type="match status" value="1"/>
</dbReference>
<dbReference type="PANTHER" id="PTHR47781">
    <property type="entry name" value="50S RIBOSOMAL PROTEIN L36 2"/>
    <property type="match status" value="1"/>
</dbReference>
<dbReference type="PANTHER" id="PTHR47781:SF1">
    <property type="entry name" value="LARGE RIBOSOMAL SUBUNIT PROTEIN BL36B"/>
    <property type="match status" value="1"/>
</dbReference>
<dbReference type="Pfam" id="PF00444">
    <property type="entry name" value="Ribosomal_L36"/>
    <property type="match status" value="1"/>
</dbReference>
<dbReference type="SUPFAM" id="SSF57840">
    <property type="entry name" value="Ribosomal protein L36"/>
    <property type="match status" value="1"/>
</dbReference>
<dbReference type="PROSITE" id="PS00828">
    <property type="entry name" value="RIBOSOMAL_L36"/>
    <property type="match status" value="1"/>
</dbReference>
<reference key="1">
    <citation type="submission" date="2008-05" db="EMBL/GenBank/DDBJ databases">
        <title>Complete sequence of Rhodopseudomonas palustris TIE-1.</title>
        <authorList>
            <consortium name="US DOE Joint Genome Institute"/>
            <person name="Lucas S."/>
            <person name="Copeland A."/>
            <person name="Lapidus A."/>
            <person name="Glavina del Rio T."/>
            <person name="Dalin E."/>
            <person name="Tice H."/>
            <person name="Pitluck S."/>
            <person name="Chain P."/>
            <person name="Malfatti S."/>
            <person name="Shin M."/>
            <person name="Vergez L."/>
            <person name="Lang D."/>
            <person name="Schmutz J."/>
            <person name="Larimer F."/>
            <person name="Land M."/>
            <person name="Hauser L."/>
            <person name="Kyrpides N."/>
            <person name="Mikhailova N."/>
            <person name="Emerson D."/>
            <person name="Newman D.K."/>
            <person name="Roden E."/>
            <person name="Richardson P."/>
        </authorList>
    </citation>
    <scope>NUCLEOTIDE SEQUENCE [LARGE SCALE GENOMIC DNA]</scope>
    <source>
        <strain>TIE-1</strain>
    </source>
</reference>
<name>RL36_RHOPT</name>
<proteinExistence type="inferred from homology"/>
<feature type="chain" id="PRO_1000101064" description="Large ribosomal subunit protein bL36">
    <location>
        <begin position="1"/>
        <end position="41"/>
    </location>
</feature>
<protein>
    <recommendedName>
        <fullName evidence="1">Large ribosomal subunit protein bL36</fullName>
    </recommendedName>
    <alternativeName>
        <fullName evidence="2">50S ribosomal protein L36</fullName>
    </alternativeName>
</protein>
<keyword id="KW-0687">Ribonucleoprotein</keyword>
<keyword id="KW-0689">Ribosomal protein</keyword>
<comment type="similarity">
    <text evidence="1">Belongs to the bacterial ribosomal protein bL36 family.</text>
</comment>
<accession>B3QKS1</accession>
<gene>
    <name evidence="1" type="primary">rpmJ</name>
    <name type="ordered locus">Rpal_4677</name>
</gene>
<organism>
    <name type="scientific">Rhodopseudomonas palustris (strain TIE-1)</name>
    <dbReference type="NCBI Taxonomy" id="395960"/>
    <lineage>
        <taxon>Bacteria</taxon>
        <taxon>Pseudomonadati</taxon>
        <taxon>Pseudomonadota</taxon>
        <taxon>Alphaproteobacteria</taxon>
        <taxon>Hyphomicrobiales</taxon>
        <taxon>Nitrobacteraceae</taxon>
        <taxon>Rhodopseudomonas</taxon>
    </lineage>
</organism>